<gene>
    <name evidence="1" type="primary">atpH</name>
    <name type="ordered locus">Shew_3848</name>
</gene>
<protein>
    <recommendedName>
        <fullName evidence="1">ATP synthase subunit delta</fullName>
    </recommendedName>
    <alternativeName>
        <fullName evidence="1">ATP synthase F(1) sector subunit delta</fullName>
    </alternativeName>
    <alternativeName>
        <fullName evidence="1">F-type ATPase subunit delta</fullName>
        <shortName evidence="1">F-ATPase subunit delta</shortName>
    </alternativeName>
</protein>
<accession>A3QJR3</accession>
<feature type="chain" id="PRO_1000184792" description="ATP synthase subunit delta">
    <location>
        <begin position="1"/>
        <end position="177"/>
    </location>
</feature>
<keyword id="KW-0066">ATP synthesis</keyword>
<keyword id="KW-0997">Cell inner membrane</keyword>
<keyword id="KW-1003">Cell membrane</keyword>
<keyword id="KW-0139">CF(1)</keyword>
<keyword id="KW-0375">Hydrogen ion transport</keyword>
<keyword id="KW-0406">Ion transport</keyword>
<keyword id="KW-0472">Membrane</keyword>
<keyword id="KW-1185">Reference proteome</keyword>
<keyword id="KW-0813">Transport</keyword>
<proteinExistence type="inferred from homology"/>
<dbReference type="EMBL" id="CP000606">
    <property type="protein sequence ID" value="ABO25711.1"/>
    <property type="molecule type" value="Genomic_DNA"/>
</dbReference>
<dbReference type="RefSeq" id="WP_011867639.1">
    <property type="nucleotide sequence ID" value="NC_009092.1"/>
</dbReference>
<dbReference type="SMR" id="A3QJR3"/>
<dbReference type="STRING" id="323850.Shew_3848"/>
<dbReference type="KEGG" id="slo:Shew_3848"/>
<dbReference type="eggNOG" id="COG0712">
    <property type="taxonomic scope" value="Bacteria"/>
</dbReference>
<dbReference type="HOGENOM" id="CLU_085114_3_0_6"/>
<dbReference type="OrthoDB" id="9816221at2"/>
<dbReference type="Proteomes" id="UP000001558">
    <property type="component" value="Chromosome"/>
</dbReference>
<dbReference type="GO" id="GO:0005886">
    <property type="term" value="C:plasma membrane"/>
    <property type="evidence" value="ECO:0007669"/>
    <property type="project" value="UniProtKB-SubCell"/>
</dbReference>
<dbReference type="GO" id="GO:0045259">
    <property type="term" value="C:proton-transporting ATP synthase complex"/>
    <property type="evidence" value="ECO:0007669"/>
    <property type="project" value="UniProtKB-KW"/>
</dbReference>
<dbReference type="GO" id="GO:0046933">
    <property type="term" value="F:proton-transporting ATP synthase activity, rotational mechanism"/>
    <property type="evidence" value="ECO:0007669"/>
    <property type="project" value="UniProtKB-UniRule"/>
</dbReference>
<dbReference type="Gene3D" id="1.10.520.20">
    <property type="entry name" value="N-terminal domain of the delta subunit of the F1F0-ATP synthase"/>
    <property type="match status" value="1"/>
</dbReference>
<dbReference type="HAMAP" id="MF_01416">
    <property type="entry name" value="ATP_synth_delta_bact"/>
    <property type="match status" value="1"/>
</dbReference>
<dbReference type="InterPro" id="IPR026015">
    <property type="entry name" value="ATP_synth_OSCP/delta_N_sf"/>
</dbReference>
<dbReference type="InterPro" id="IPR000711">
    <property type="entry name" value="ATPase_OSCP/dsu"/>
</dbReference>
<dbReference type="NCBIfam" id="TIGR01145">
    <property type="entry name" value="ATP_synt_delta"/>
    <property type="match status" value="1"/>
</dbReference>
<dbReference type="NCBIfam" id="NF004402">
    <property type="entry name" value="PRK05758.2-2"/>
    <property type="match status" value="1"/>
</dbReference>
<dbReference type="NCBIfam" id="NF004404">
    <property type="entry name" value="PRK05758.2-5"/>
    <property type="match status" value="1"/>
</dbReference>
<dbReference type="PANTHER" id="PTHR11910">
    <property type="entry name" value="ATP SYNTHASE DELTA CHAIN"/>
    <property type="match status" value="1"/>
</dbReference>
<dbReference type="Pfam" id="PF00213">
    <property type="entry name" value="OSCP"/>
    <property type="match status" value="1"/>
</dbReference>
<dbReference type="PRINTS" id="PR00125">
    <property type="entry name" value="ATPASEDELTA"/>
</dbReference>
<dbReference type="SUPFAM" id="SSF47928">
    <property type="entry name" value="N-terminal domain of the delta subunit of the F1F0-ATP synthase"/>
    <property type="match status" value="1"/>
</dbReference>
<organism>
    <name type="scientific">Shewanella loihica (strain ATCC BAA-1088 / PV-4)</name>
    <dbReference type="NCBI Taxonomy" id="323850"/>
    <lineage>
        <taxon>Bacteria</taxon>
        <taxon>Pseudomonadati</taxon>
        <taxon>Pseudomonadota</taxon>
        <taxon>Gammaproteobacteria</taxon>
        <taxon>Alteromonadales</taxon>
        <taxon>Shewanellaceae</taxon>
        <taxon>Shewanella</taxon>
    </lineage>
</organism>
<reference key="1">
    <citation type="submission" date="2007-03" db="EMBL/GenBank/DDBJ databases">
        <title>Complete sequence of Shewanella loihica PV-4.</title>
        <authorList>
            <consortium name="US DOE Joint Genome Institute"/>
            <person name="Copeland A."/>
            <person name="Lucas S."/>
            <person name="Lapidus A."/>
            <person name="Barry K."/>
            <person name="Detter J.C."/>
            <person name="Glavina del Rio T."/>
            <person name="Hammon N."/>
            <person name="Israni S."/>
            <person name="Dalin E."/>
            <person name="Tice H."/>
            <person name="Pitluck S."/>
            <person name="Chain P."/>
            <person name="Malfatti S."/>
            <person name="Shin M."/>
            <person name="Vergez L."/>
            <person name="Schmutz J."/>
            <person name="Larimer F."/>
            <person name="Land M."/>
            <person name="Hauser L."/>
            <person name="Kyrpides N."/>
            <person name="Mikhailova N."/>
            <person name="Romine M.F."/>
            <person name="Serres G."/>
            <person name="Fredrickson J."/>
            <person name="Tiedje J."/>
            <person name="Richardson P."/>
        </authorList>
    </citation>
    <scope>NUCLEOTIDE SEQUENCE [LARGE SCALE GENOMIC DNA]</scope>
    <source>
        <strain>ATCC BAA-1088 / PV-4</strain>
    </source>
</reference>
<comment type="function">
    <text evidence="1">F(1)F(0) ATP synthase produces ATP from ADP in the presence of a proton or sodium gradient. F-type ATPases consist of two structural domains, F(1) containing the extramembraneous catalytic core and F(0) containing the membrane proton channel, linked together by a central stalk and a peripheral stalk. During catalysis, ATP synthesis in the catalytic domain of F(1) is coupled via a rotary mechanism of the central stalk subunits to proton translocation.</text>
</comment>
<comment type="function">
    <text evidence="1">This protein is part of the stalk that links CF(0) to CF(1). It either transmits conformational changes from CF(0) to CF(1) or is implicated in proton conduction.</text>
</comment>
<comment type="subunit">
    <text evidence="1">F-type ATPases have 2 components, F(1) - the catalytic core - and F(0) - the membrane proton channel. F(1) has five subunits: alpha(3), beta(3), gamma(1), delta(1), epsilon(1). F(0) has three main subunits: a(1), b(2) and c(10-14). The alpha and beta chains form an alternating ring which encloses part of the gamma chain. F(1) is attached to F(0) by a central stalk formed by the gamma and epsilon chains, while a peripheral stalk is formed by the delta and b chains.</text>
</comment>
<comment type="subcellular location">
    <subcellularLocation>
        <location evidence="1">Cell inner membrane</location>
        <topology evidence="1">Peripheral membrane protein</topology>
    </subcellularLocation>
</comment>
<comment type="similarity">
    <text evidence="1">Belongs to the ATPase delta chain family.</text>
</comment>
<sequence length="177" mass="19209">MAELSTIARPYAKAAFDFAIEKNAVESWAEMLSFAAQVSENETMKPLLSGALSSSQLADLFIKVCGEQINEQGQNLIKVMAENGRLEVLPAVYELFHEFSNEWAKEVEASVVSATELSAEQQQQISASLEKRLTRKVKLNCSVDASLVAGVIITAGDLVIDGSVSGKLNRLSEKLQS</sequence>
<evidence type="ECO:0000255" key="1">
    <source>
        <dbReference type="HAMAP-Rule" id="MF_01416"/>
    </source>
</evidence>
<name>ATPD_SHELP</name>